<dbReference type="EMBL" id="CP000469">
    <property type="protein sequence ID" value="ABK46446.1"/>
    <property type="molecule type" value="Genomic_DNA"/>
</dbReference>
<dbReference type="RefSeq" id="WP_011621028.1">
    <property type="nucleotide sequence ID" value="NC_008577.1"/>
</dbReference>
<dbReference type="SMR" id="A0KRM7"/>
<dbReference type="STRING" id="94122.Shewana3_0202"/>
<dbReference type="GeneID" id="94726189"/>
<dbReference type="KEGG" id="shn:Shewana3_0202"/>
<dbReference type="eggNOG" id="COG0090">
    <property type="taxonomic scope" value="Bacteria"/>
</dbReference>
<dbReference type="HOGENOM" id="CLU_036235_2_1_6"/>
<dbReference type="OrthoDB" id="9778722at2"/>
<dbReference type="Proteomes" id="UP000002589">
    <property type="component" value="Chromosome"/>
</dbReference>
<dbReference type="GO" id="GO:0015934">
    <property type="term" value="C:large ribosomal subunit"/>
    <property type="evidence" value="ECO:0007669"/>
    <property type="project" value="InterPro"/>
</dbReference>
<dbReference type="GO" id="GO:0019843">
    <property type="term" value="F:rRNA binding"/>
    <property type="evidence" value="ECO:0007669"/>
    <property type="project" value="UniProtKB-UniRule"/>
</dbReference>
<dbReference type="GO" id="GO:0003735">
    <property type="term" value="F:structural constituent of ribosome"/>
    <property type="evidence" value="ECO:0007669"/>
    <property type="project" value="InterPro"/>
</dbReference>
<dbReference type="GO" id="GO:0016740">
    <property type="term" value="F:transferase activity"/>
    <property type="evidence" value="ECO:0007669"/>
    <property type="project" value="InterPro"/>
</dbReference>
<dbReference type="GO" id="GO:0002181">
    <property type="term" value="P:cytoplasmic translation"/>
    <property type="evidence" value="ECO:0007669"/>
    <property type="project" value="TreeGrafter"/>
</dbReference>
<dbReference type="FunFam" id="2.30.30.30:FF:000001">
    <property type="entry name" value="50S ribosomal protein L2"/>
    <property type="match status" value="1"/>
</dbReference>
<dbReference type="FunFam" id="2.40.50.140:FF:000003">
    <property type="entry name" value="50S ribosomal protein L2"/>
    <property type="match status" value="1"/>
</dbReference>
<dbReference type="FunFam" id="4.10.950.10:FF:000001">
    <property type="entry name" value="50S ribosomal protein L2"/>
    <property type="match status" value="1"/>
</dbReference>
<dbReference type="Gene3D" id="2.30.30.30">
    <property type="match status" value="1"/>
</dbReference>
<dbReference type="Gene3D" id="2.40.50.140">
    <property type="entry name" value="Nucleic acid-binding proteins"/>
    <property type="match status" value="1"/>
</dbReference>
<dbReference type="Gene3D" id="4.10.950.10">
    <property type="entry name" value="Ribosomal protein L2, domain 3"/>
    <property type="match status" value="1"/>
</dbReference>
<dbReference type="HAMAP" id="MF_01320_B">
    <property type="entry name" value="Ribosomal_uL2_B"/>
    <property type="match status" value="1"/>
</dbReference>
<dbReference type="InterPro" id="IPR012340">
    <property type="entry name" value="NA-bd_OB-fold"/>
</dbReference>
<dbReference type="InterPro" id="IPR014722">
    <property type="entry name" value="Rib_uL2_dom2"/>
</dbReference>
<dbReference type="InterPro" id="IPR002171">
    <property type="entry name" value="Ribosomal_uL2"/>
</dbReference>
<dbReference type="InterPro" id="IPR005880">
    <property type="entry name" value="Ribosomal_uL2_bac/org-type"/>
</dbReference>
<dbReference type="InterPro" id="IPR022669">
    <property type="entry name" value="Ribosomal_uL2_C"/>
</dbReference>
<dbReference type="InterPro" id="IPR022671">
    <property type="entry name" value="Ribosomal_uL2_CS"/>
</dbReference>
<dbReference type="InterPro" id="IPR014726">
    <property type="entry name" value="Ribosomal_uL2_dom3"/>
</dbReference>
<dbReference type="InterPro" id="IPR022666">
    <property type="entry name" value="Ribosomal_uL2_RNA-bd_dom"/>
</dbReference>
<dbReference type="InterPro" id="IPR008991">
    <property type="entry name" value="Translation_prot_SH3-like_sf"/>
</dbReference>
<dbReference type="NCBIfam" id="TIGR01171">
    <property type="entry name" value="rplB_bact"/>
    <property type="match status" value="1"/>
</dbReference>
<dbReference type="PANTHER" id="PTHR13691:SF5">
    <property type="entry name" value="LARGE RIBOSOMAL SUBUNIT PROTEIN UL2M"/>
    <property type="match status" value="1"/>
</dbReference>
<dbReference type="PANTHER" id="PTHR13691">
    <property type="entry name" value="RIBOSOMAL PROTEIN L2"/>
    <property type="match status" value="1"/>
</dbReference>
<dbReference type="Pfam" id="PF00181">
    <property type="entry name" value="Ribosomal_L2"/>
    <property type="match status" value="1"/>
</dbReference>
<dbReference type="Pfam" id="PF03947">
    <property type="entry name" value="Ribosomal_L2_C"/>
    <property type="match status" value="1"/>
</dbReference>
<dbReference type="PIRSF" id="PIRSF002158">
    <property type="entry name" value="Ribosomal_L2"/>
    <property type="match status" value="1"/>
</dbReference>
<dbReference type="SMART" id="SM01383">
    <property type="entry name" value="Ribosomal_L2"/>
    <property type="match status" value="1"/>
</dbReference>
<dbReference type="SMART" id="SM01382">
    <property type="entry name" value="Ribosomal_L2_C"/>
    <property type="match status" value="1"/>
</dbReference>
<dbReference type="SUPFAM" id="SSF50249">
    <property type="entry name" value="Nucleic acid-binding proteins"/>
    <property type="match status" value="1"/>
</dbReference>
<dbReference type="SUPFAM" id="SSF50104">
    <property type="entry name" value="Translation proteins SH3-like domain"/>
    <property type="match status" value="1"/>
</dbReference>
<dbReference type="PROSITE" id="PS00467">
    <property type="entry name" value="RIBOSOMAL_L2"/>
    <property type="match status" value="1"/>
</dbReference>
<reference key="1">
    <citation type="submission" date="2006-09" db="EMBL/GenBank/DDBJ databases">
        <title>Complete sequence of chromosome 1 of Shewanella sp. ANA-3.</title>
        <authorList>
            <person name="Copeland A."/>
            <person name="Lucas S."/>
            <person name="Lapidus A."/>
            <person name="Barry K."/>
            <person name="Detter J.C."/>
            <person name="Glavina del Rio T."/>
            <person name="Hammon N."/>
            <person name="Israni S."/>
            <person name="Dalin E."/>
            <person name="Tice H."/>
            <person name="Pitluck S."/>
            <person name="Chertkov O."/>
            <person name="Brettin T."/>
            <person name="Bruce D."/>
            <person name="Han C."/>
            <person name="Tapia R."/>
            <person name="Gilna P."/>
            <person name="Schmutz J."/>
            <person name="Larimer F."/>
            <person name="Land M."/>
            <person name="Hauser L."/>
            <person name="Kyrpides N."/>
            <person name="Kim E."/>
            <person name="Newman D."/>
            <person name="Salticov C."/>
            <person name="Konstantinidis K."/>
            <person name="Klappenback J."/>
            <person name="Tiedje J."/>
            <person name="Richardson P."/>
        </authorList>
    </citation>
    <scope>NUCLEOTIDE SEQUENCE [LARGE SCALE GENOMIC DNA]</scope>
    <source>
        <strain>ANA-3</strain>
    </source>
</reference>
<keyword id="KW-0687">Ribonucleoprotein</keyword>
<keyword id="KW-0689">Ribosomal protein</keyword>
<keyword id="KW-0694">RNA-binding</keyword>
<keyword id="KW-0699">rRNA-binding</keyword>
<accession>A0KRM7</accession>
<proteinExistence type="inferred from homology"/>
<comment type="function">
    <text evidence="1">One of the primary rRNA binding proteins. Required for association of the 30S and 50S subunits to form the 70S ribosome, for tRNA binding and peptide bond formation. It has been suggested to have peptidyltransferase activity; this is somewhat controversial. Makes several contacts with the 16S rRNA in the 70S ribosome.</text>
</comment>
<comment type="subunit">
    <text evidence="1">Part of the 50S ribosomal subunit. Forms a bridge to the 30S subunit in the 70S ribosome.</text>
</comment>
<comment type="similarity">
    <text evidence="1">Belongs to the universal ribosomal protein uL2 family.</text>
</comment>
<evidence type="ECO:0000255" key="1">
    <source>
        <dbReference type="HAMAP-Rule" id="MF_01320"/>
    </source>
</evidence>
<evidence type="ECO:0000256" key="2">
    <source>
        <dbReference type="SAM" id="MobiDB-lite"/>
    </source>
</evidence>
<evidence type="ECO:0000305" key="3"/>
<organism>
    <name type="scientific">Shewanella sp. (strain ANA-3)</name>
    <dbReference type="NCBI Taxonomy" id="94122"/>
    <lineage>
        <taxon>Bacteria</taxon>
        <taxon>Pseudomonadati</taxon>
        <taxon>Pseudomonadota</taxon>
        <taxon>Gammaproteobacteria</taxon>
        <taxon>Alteromonadales</taxon>
        <taxon>Shewanellaceae</taxon>
        <taxon>Shewanella</taxon>
    </lineage>
</organism>
<feature type="chain" id="PRO_0000310012" description="Large ribosomal subunit protein uL2">
    <location>
        <begin position="1"/>
        <end position="274"/>
    </location>
</feature>
<feature type="region of interest" description="Disordered" evidence="2">
    <location>
        <begin position="223"/>
        <end position="274"/>
    </location>
</feature>
<name>RL2_SHESA</name>
<protein>
    <recommendedName>
        <fullName evidence="1">Large ribosomal subunit protein uL2</fullName>
    </recommendedName>
    <alternativeName>
        <fullName evidence="3">50S ribosomal protein L2</fullName>
    </alternativeName>
</protein>
<sequence>MAVIKCKPTSPGRRHVVKVVNSDLHKGKPFAGLLAKKSKSGGRNNTGRITVRHVGGGHKQHYRLIDFKRDKDGIPAKIERLEYDPNRTAHIALVLYADGERRYILAAKGMQAGDKIQSGVEAEIKTGNAMPLRNIPVGSVVHAVEMKPGKGAQIARSAGAYVQVVARDGAYATLRLRSGEMRKVPVDCRATFGEVGNAEHMLRQLGKAGAKRWRGVRPTVRGVAMNPVDHPHGGGEGRTSGGRHPVTPWGVPTKGYKTRSNKRTDKYIVRRRNK</sequence>
<gene>
    <name evidence="1" type="primary">rplB</name>
    <name type="ordered locus">Shewana3_0202</name>
</gene>